<feature type="chain" id="PRO_0000048653" description="Sex-determining region Y protein">
    <location>
        <begin position="1"/>
        <end position="240"/>
    </location>
</feature>
<feature type="DNA-binding region" description="HMG box" evidence="3">
    <location>
        <begin position="65"/>
        <end position="133"/>
    </location>
</feature>
<keyword id="KW-0007">Acetylation</keyword>
<keyword id="KW-0010">Activator</keyword>
<keyword id="KW-0112">Calmodulin-binding</keyword>
<keyword id="KW-0963">Cytoplasm</keyword>
<keyword id="KW-0221">Differentiation</keyword>
<keyword id="KW-0238">DNA-binding</keyword>
<keyword id="KW-0539">Nucleus</keyword>
<keyword id="KW-1185">Reference proteome</keyword>
<keyword id="KW-0678">Repressor</keyword>
<keyword id="KW-0726">Sexual differentiation</keyword>
<keyword id="KW-0804">Transcription</keyword>
<keyword id="KW-0805">Transcription regulation</keyword>
<gene>
    <name type="primary">SRY</name>
    <name type="synonym">TDF</name>
</gene>
<reference key="1">
    <citation type="journal article" date="1994" name="Mamm. Genome">
        <title>Sequence evolution of SRY gene within Bovidae family.</title>
        <authorList>
            <person name="Payen E.J."/>
            <person name="Cotinot C.Y."/>
        </authorList>
    </citation>
    <scope>NUCLEOTIDE SEQUENCE [GENOMIC DNA]</scope>
</reference>
<reference key="2">
    <citation type="submission" date="1996-01" db="EMBL/GenBank/DDBJ databases">
        <title>Cloning of the genomic SRY gene in Shiba goat (Caprahircus var. Shiba).</title>
        <authorList>
            <person name="Muraoka H."/>
            <person name="Kodama T."/>
            <person name="Nakahori Y."/>
            <person name="Nakagome Y."/>
            <person name="Tanaka S."/>
            <person name="Tojo H."/>
            <person name="Tachi C."/>
        </authorList>
    </citation>
    <scope>NUCLEOTIDE SEQUENCE [GENOMIC DNA]</scope>
    <source>
        <strain>Shiba</strain>
        <tissue>Testis</tissue>
    </source>
</reference>
<reference key="3">
    <citation type="journal article" date="1993" name="Nucleic Acids Res.">
        <title>Comparative HMG-box sequences of the SRY gene between sheep, cattle and goats.</title>
        <authorList>
            <person name="Payen E.J."/>
            <person name="Cotinot C.Y."/>
        </authorList>
    </citation>
    <scope>NUCLEOTIDE SEQUENCE [GENOMIC DNA] OF 72-131</scope>
    <source>
        <tissue>Blood</tissue>
    </source>
</reference>
<comment type="function">
    <text evidence="1 2">Transcriptional regulator that controls a genetic switch in male development. It is necessary and sufficient for initiating male sex determination by directing the development of supporting cell precursors (pre-Sertoli cells) as Sertoli rather than granulosa cells. Involved in different aspects of gene regulation including promoter activation or repression. Binds to the DNA consensus sequence 5'-[AT]AACAA[AT]-3'. SRY HMG box recognizes DNA by partial intercalation in the minor groove and promotes DNA bending. Also involved in pre-mRNA splicing (By similarity). In male adult brain involved in the maintenance of motor functions of dopaminergic neurons (By similarity).</text>
</comment>
<comment type="subunit">
    <text evidence="2">Interacts with CALM, EP300, HDAC3, KPNB1, ZNF208 isoform KRAB-O, PARP1, SLC9A3R2 and WT1. The interaction with EP300 modulates its DNA-binding activity. The interaction with KPNB1 is sensitive to dissociation by Ran in the GTP-bound form. Interaction with PARP1 impaired its DNA-binding activity.</text>
</comment>
<comment type="subcellular location">
    <subcellularLocation>
        <location evidence="2">Nucleus speckle</location>
    </subcellularLocation>
    <subcellularLocation>
        <location evidence="2">Cytoplasm</location>
    </subcellularLocation>
    <subcellularLocation>
        <location evidence="2">Nucleus</location>
    </subcellularLocation>
</comment>
<comment type="PTM">
    <text evidence="2">Acetylation of Lys-141 contributes to its nuclear localization and enhances its interaction with KPNB1. Deacetylated by HDAC3.</text>
</comment>
<comment type="similarity">
    <text evidence="4">Belongs to the SRY family.</text>
</comment>
<comment type="online information" name="Protein Spotlight">
    <link uri="https://www.proteinspotlight.org/back_issues/080"/>
    <text>The tenuous nature of sex - Issue 80 of March 2007</text>
</comment>
<proteinExistence type="inferred from homology"/>
<name>SRY_CAPHI</name>
<accession>Q03256</accession>
<accession>Q53X43</accession>
<evidence type="ECO:0000250" key="1">
    <source>
        <dbReference type="UniProtKB" id="P36394"/>
    </source>
</evidence>
<evidence type="ECO:0000250" key="2">
    <source>
        <dbReference type="UniProtKB" id="Q05066"/>
    </source>
</evidence>
<evidence type="ECO:0000255" key="3">
    <source>
        <dbReference type="PROSITE-ProRule" id="PRU00267"/>
    </source>
</evidence>
<evidence type="ECO:0000305" key="4"/>
<sequence>MNRTVQSYASAMFRVLKDDVYSPAVVQQQNTFAFGKTSSLCTDNHSANDQCERGENVTESSQDHVKRPMNAFIVWSRERRRKVALENPKLQNSEISKQLGYEWKRLTDAEKRPFFEEAQRLLAIHRDKYPGYKYRPRRKAKRPQKSLDADSPILCNQMDVETLHPFTYRDDCAKTTHSQMESQLCRSQSLILTNSLLQKEHHSSWTNLGHDRVTLDTRISADFPFYQSLEPGLSCAYVQY</sequence>
<dbReference type="EMBL" id="Z30646">
    <property type="protein sequence ID" value="CAA83123.1"/>
    <property type="molecule type" value="Genomic_DNA"/>
</dbReference>
<dbReference type="EMBL" id="D82963">
    <property type="protein sequence ID" value="BAC66700.1"/>
    <property type="molecule type" value="Genomic_DNA"/>
</dbReference>
<dbReference type="EMBL" id="Z18757">
    <property type="protein sequence ID" value="CAA79246.1"/>
    <property type="status" value="ALT_SEQ"/>
    <property type="molecule type" value="Genomic_DNA"/>
</dbReference>
<dbReference type="PIR" id="S51713">
    <property type="entry name" value="S51713"/>
</dbReference>
<dbReference type="RefSeq" id="XP_017899961.1">
    <property type="nucleotide sequence ID" value="XM_018044472.1"/>
</dbReference>
<dbReference type="SMR" id="Q03256"/>
<dbReference type="STRING" id="9925.ENSCHIP00000020142"/>
<dbReference type="Ensembl" id="ENSCHIT00000027971.1">
    <property type="protein sequence ID" value="ENSCHIP00000020142.1"/>
    <property type="gene ID" value="ENSCHIG00000018898.1"/>
</dbReference>
<dbReference type="GeneID" id="108634533"/>
<dbReference type="KEGG" id="chx:108634533"/>
<dbReference type="CTD" id="6736"/>
<dbReference type="GeneTree" id="ENSGT00940000165583"/>
<dbReference type="OMA" id="DCTKATH"/>
<dbReference type="OrthoDB" id="6247875at2759"/>
<dbReference type="Proteomes" id="UP000291000">
    <property type="component" value="Unassembled WGS sequence"/>
</dbReference>
<dbReference type="Proteomes" id="UP000694566">
    <property type="component" value="Unplaced"/>
</dbReference>
<dbReference type="Bgee" id="ENSCHIG00000018898">
    <property type="expression patterns" value="Expressed in testis"/>
</dbReference>
<dbReference type="GO" id="GO:0005737">
    <property type="term" value="C:cytoplasm"/>
    <property type="evidence" value="ECO:0007669"/>
    <property type="project" value="UniProtKB-SubCell"/>
</dbReference>
<dbReference type="GO" id="GO:0016607">
    <property type="term" value="C:nuclear speck"/>
    <property type="evidence" value="ECO:0007669"/>
    <property type="project" value="UniProtKB-SubCell"/>
</dbReference>
<dbReference type="GO" id="GO:0005634">
    <property type="term" value="C:nucleus"/>
    <property type="evidence" value="ECO:0000250"/>
    <property type="project" value="UniProtKB"/>
</dbReference>
<dbReference type="GO" id="GO:0005516">
    <property type="term" value="F:calmodulin binding"/>
    <property type="evidence" value="ECO:0007669"/>
    <property type="project" value="UniProtKB-KW"/>
</dbReference>
<dbReference type="GO" id="GO:0001228">
    <property type="term" value="F:DNA-binding transcription activator activity, RNA polymerase II-specific"/>
    <property type="evidence" value="ECO:0007669"/>
    <property type="project" value="TreeGrafter"/>
</dbReference>
<dbReference type="GO" id="GO:0000978">
    <property type="term" value="F:RNA polymerase II cis-regulatory region sequence-specific DNA binding"/>
    <property type="evidence" value="ECO:0007669"/>
    <property type="project" value="TreeGrafter"/>
</dbReference>
<dbReference type="GO" id="GO:0030154">
    <property type="term" value="P:cell differentiation"/>
    <property type="evidence" value="ECO:0007669"/>
    <property type="project" value="UniProtKB-KW"/>
</dbReference>
<dbReference type="GO" id="GO:0030238">
    <property type="term" value="P:male sex determination"/>
    <property type="evidence" value="ECO:0007669"/>
    <property type="project" value="InterPro"/>
</dbReference>
<dbReference type="GO" id="GO:0010628">
    <property type="term" value="P:positive regulation of gene expression"/>
    <property type="evidence" value="ECO:0000250"/>
    <property type="project" value="UniProtKB"/>
</dbReference>
<dbReference type="GO" id="GO:0007548">
    <property type="term" value="P:sex differentiation"/>
    <property type="evidence" value="ECO:0007669"/>
    <property type="project" value="UniProtKB-KW"/>
</dbReference>
<dbReference type="CDD" id="cd22028">
    <property type="entry name" value="HMG-box_SoxA_SoxB_SoxG"/>
    <property type="match status" value="1"/>
</dbReference>
<dbReference type="FunFam" id="1.10.30.10:FF:000002">
    <property type="entry name" value="transcription factor Sox-2"/>
    <property type="match status" value="1"/>
</dbReference>
<dbReference type="Gene3D" id="1.10.30.10">
    <property type="entry name" value="High mobility group box domain"/>
    <property type="match status" value="1"/>
</dbReference>
<dbReference type="InterPro" id="IPR009071">
    <property type="entry name" value="HMG_box_dom"/>
</dbReference>
<dbReference type="InterPro" id="IPR036910">
    <property type="entry name" value="HMG_box_dom_sf"/>
</dbReference>
<dbReference type="InterPro" id="IPR017253">
    <property type="entry name" value="SRY"/>
</dbReference>
<dbReference type="InterPro" id="IPR050140">
    <property type="entry name" value="SRY-related_HMG-box_TF-like"/>
</dbReference>
<dbReference type="PANTHER" id="PTHR10270:SF161">
    <property type="entry name" value="SEX-DETERMINING REGION Y PROTEIN"/>
    <property type="match status" value="1"/>
</dbReference>
<dbReference type="PANTHER" id="PTHR10270">
    <property type="entry name" value="SOX TRANSCRIPTION FACTOR"/>
    <property type="match status" value="1"/>
</dbReference>
<dbReference type="Pfam" id="PF00505">
    <property type="entry name" value="HMG_box"/>
    <property type="match status" value="1"/>
</dbReference>
<dbReference type="PIRSF" id="PIRSF037653">
    <property type="entry name" value="SRY"/>
    <property type="match status" value="1"/>
</dbReference>
<dbReference type="SMART" id="SM00398">
    <property type="entry name" value="HMG"/>
    <property type="match status" value="1"/>
</dbReference>
<dbReference type="SUPFAM" id="SSF47095">
    <property type="entry name" value="HMG-box"/>
    <property type="match status" value="1"/>
</dbReference>
<dbReference type="PROSITE" id="PS50118">
    <property type="entry name" value="HMG_BOX_2"/>
    <property type="match status" value="1"/>
</dbReference>
<protein>
    <recommendedName>
        <fullName>Sex-determining region Y protein</fullName>
    </recommendedName>
    <alternativeName>
        <fullName>Testis-determining factor</fullName>
    </alternativeName>
</protein>
<organism>
    <name type="scientific">Capra hircus</name>
    <name type="common">Goat</name>
    <dbReference type="NCBI Taxonomy" id="9925"/>
    <lineage>
        <taxon>Eukaryota</taxon>
        <taxon>Metazoa</taxon>
        <taxon>Chordata</taxon>
        <taxon>Craniata</taxon>
        <taxon>Vertebrata</taxon>
        <taxon>Euteleostomi</taxon>
        <taxon>Mammalia</taxon>
        <taxon>Eutheria</taxon>
        <taxon>Laurasiatheria</taxon>
        <taxon>Artiodactyla</taxon>
        <taxon>Ruminantia</taxon>
        <taxon>Pecora</taxon>
        <taxon>Bovidae</taxon>
        <taxon>Caprinae</taxon>
        <taxon>Capra</taxon>
    </lineage>
</organism>